<proteinExistence type="inferred from homology"/>
<name>FNR_SALTI</name>
<dbReference type="EMBL" id="AL513382">
    <property type="protein sequence ID" value="CAD01670.1"/>
    <property type="status" value="ALT_INIT"/>
    <property type="molecule type" value="Genomic_DNA"/>
</dbReference>
<dbReference type="EMBL" id="AE014613">
    <property type="protein sequence ID" value="AAO69195.1"/>
    <property type="status" value="ALT_INIT"/>
    <property type="molecule type" value="Genomic_DNA"/>
</dbReference>
<dbReference type="PIR" id="AE0662">
    <property type="entry name" value="AE0662"/>
</dbReference>
<dbReference type="RefSeq" id="NP_455844.3">
    <property type="nucleotide sequence ID" value="NC_003198.1"/>
</dbReference>
<dbReference type="RefSeq" id="WP_000611917.1">
    <property type="nucleotide sequence ID" value="NZ_WSUR01000041.1"/>
</dbReference>
<dbReference type="SMR" id="Q8Z787"/>
<dbReference type="STRING" id="220341.gene:17585360"/>
<dbReference type="KEGG" id="stt:t1564"/>
<dbReference type="KEGG" id="sty:STY1404"/>
<dbReference type="PATRIC" id="fig|220341.7.peg.1414"/>
<dbReference type="eggNOG" id="COG0664">
    <property type="taxonomic scope" value="Bacteria"/>
</dbReference>
<dbReference type="HOGENOM" id="CLU_075053_0_2_6"/>
<dbReference type="OMA" id="SICRIHK"/>
<dbReference type="OrthoDB" id="7643467at2"/>
<dbReference type="Proteomes" id="UP000000541">
    <property type="component" value="Chromosome"/>
</dbReference>
<dbReference type="Proteomes" id="UP000002670">
    <property type="component" value="Chromosome"/>
</dbReference>
<dbReference type="GO" id="GO:0005829">
    <property type="term" value="C:cytosol"/>
    <property type="evidence" value="ECO:0007669"/>
    <property type="project" value="TreeGrafter"/>
</dbReference>
<dbReference type="GO" id="GO:0051539">
    <property type="term" value="F:4 iron, 4 sulfur cluster binding"/>
    <property type="evidence" value="ECO:0007669"/>
    <property type="project" value="UniProtKB-KW"/>
</dbReference>
<dbReference type="GO" id="GO:0003677">
    <property type="term" value="F:DNA binding"/>
    <property type="evidence" value="ECO:0007669"/>
    <property type="project" value="UniProtKB-KW"/>
</dbReference>
<dbReference type="GO" id="GO:0003700">
    <property type="term" value="F:DNA-binding transcription factor activity"/>
    <property type="evidence" value="ECO:0007669"/>
    <property type="project" value="InterPro"/>
</dbReference>
<dbReference type="GO" id="GO:0046872">
    <property type="term" value="F:metal ion binding"/>
    <property type="evidence" value="ECO:0007669"/>
    <property type="project" value="UniProtKB-KW"/>
</dbReference>
<dbReference type="CDD" id="cd00038">
    <property type="entry name" value="CAP_ED"/>
    <property type="match status" value="1"/>
</dbReference>
<dbReference type="CDD" id="cd00092">
    <property type="entry name" value="HTH_CRP"/>
    <property type="match status" value="1"/>
</dbReference>
<dbReference type="FunFam" id="1.10.10.10:FF:000028">
    <property type="entry name" value="Fumarate/nitrate reduction transcriptional regulator Fnr"/>
    <property type="match status" value="1"/>
</dbReference>
<dbReference type="FunFam" id="2.60.120.10:FF:000004">
    <property type="entry name" value="Fumarate/nitrate reduction transcriptional regulator Fnr"/>
    <property type="match status" value="1"/>
</dbReference>
<dbReference type="Gene3D" id="2.60.120.10">
    <property type="entry name" value="Jelly Rolls"/>
    <property type="match status" value="1"/>
</dbReference>
<dbReference type="Gene3D" id="1.10.10.10">
    <property type="entry name" value="Winged helix-like DNA-binding domain superfamily/Winged helix DNA-binding domain"/>
    <property type="match status" value="1"/>
</dbReference>
<dbReference type="InterPro" id="IPR000595">
    <property type="entry name" value="cNMP-bd_dom"/>
</dbReference>
<dbReference type="InterPro" id="IPR018490">
    <property type="entry name" value="cNMP-bd_dom_sf"/>
</dbReference>
<dbReference type="InterPro" id="IPR050397">
    <property type="entry name" value="Env_Response_Regulators"/>
</dbReference>
<dbReference type="InterPro" id="IPR012318">
    <property type="entry name" value="HTH_CRP"/>
</dbReference>
<dbReference type="InterPro" id="IPR014710">
    <property type="entry name" value="RmlC-like_jellyroll"/>
</dbReference>
<dbReference type="InterPro" id="IPR018335">
    <property type="entry name" value="Tscrpt_reg_HTH_Crp-type_CS"/>
</dbReference>
<dbReference type="InterPro" id="IPR036388">
    <property type="entry name" value="WH-like_DNA-bd_sf"/>
</dbReference>
<dbReference type="InterPro" id="IPR036390">
    <property type="entry name" value="WH_DNA-bd_sf"/>
</dbReference>
<dbReference type="NCBIfam" id="NF008365">
    <property type="entry name" value="PRK11161.1"/>
    <property type="match status" value="1"/>
</dbReference>
<dbReference type="PANTHER" id="PTHR24567">
    <property type="entry name" value="CRP FAMILY TRANSCRIPTIONAL REGULATORY PROTEIN"/>
    <property type="match status" value="1"/>
</dbReference>
<dbReference type="PANTHER" id="PTHR24567:SF75">
    <property type="entry name" value="FUMARATE AND NITRATE REDUCTION REGULATORY PROTEIN"/>
    <property type="match status" value="1"/>
</dbReference>
<dbReference type="Pfam" id="PF00027">
    <property type="entry name" value="cNMP_binding"/>
    <property type="match status" value="1"/>
</dbReference>
<dbReference type="Pfam" id="PF13545">
    <property type="entry name" value="HTH_Crp_2"/>
    <property type="match status" value="1"/>
</dbReference>
<dbReference type="PRINTS" id="PR00034">
    <property type="entry name" value="HTHCRP"/>
</dbReference>
<dbReference type="SMART" id="SM00100">
    <property type="entry name" value="cNMP"/>
    <property type="match status" value="1"/>
</dbReference>
<dbReference type="SMART" id="SM00419">
    <property type="entry name" value="HTH_CRP"/>
    <property type="match status" value="1"/>
</dbReference>
<dbReference type="SUPFAM" id="SSF51206">
    <property type="entry name" value="cAMP-binding domain-like"/>
    <property type="match status" value="1"/>
</dbReference>
<dbReference type="SUPFAM" id="SSF46785">
    <property type="entry name" value="Winged helix' DNA-binding domain"/>
    <property type="match status" value="1"/>
</dbReference>
<dbReference type="PROSITE" id="PS50042">
    <property type="entry name" value="CNMP_BINDING_3"/>
    <property type="match status" value="1"/>
</dbReference>
<dbReference type="PROSITE" id="PS00042">
    <property type="entry name" value="HTH_CRP_1"/>
    <property type="match status" value="1"/>
</dbReference>
<dbReference type="PROSITE" id="PS51063">
    <property type="entry name" value="HTH_CRP_2"/>
    <property type="match status" value="1"/>
</dbReference>
<keyword id="KW-0004">4Fe-4S</keyword>
<keyword id="KW-0010">Activator</keyword>
<keyword id="KW-0963">Cytoplasm</keyword>
<keyword id="KW-0238">DNA-binding</keyword>
<keyword id="KW-0408">Iron</keyword>
<keyword id="KW-0411">Iron-sulfur</keyword>
<keyword id="KW-0479">Metal-binding</keyword>
<keyword id="KW-0678">Repressor</keyword>
<keyword id="KW-0804">Transcription</keyword>
<keyword id="KW-0805">Transcription regulation</keyword>
<comment type="function">
    <text evidence="1">Global transcription factor that controls the expression of over 100 target genes in response to anoxia. It facilitates the adaptation to anaerobic growth conditions by regulating the expression of gene products that are involved in anaerobic energy metabolism. When the terminal electron acceptor, O(2), is no longer available, it represses the synthesis of enzymes involved in aerobic respiration and increases the synthesis of enzymes required for anaerobic respiration (By similarity).</text>
</comment>
<comment type="cofactor">
    <cofactor evidence="1">
        <name>[4Fe-4S] cluster</name>
        <dbReference type="ChEBI" id="CHEBI:49883"/>
    </cofactor>
    <text evidence="1">Binds 1 [4Fe-4S] cluster per subunit.</text>
</comment>
<comment type="subunit">
    <text evidence="1">Homodimer.</text>
</comment>
<comment type="subcellular location">
    <subcellularLocation>
        <location evidence="4">Cytoplasm</location>
    </subcellularLocation>
</comment>
<comment type="sequence caution" evidence="4">
    <conflict type="erroneous initiation">
        <sequence resource="EMBL-CDS" id="AAO69195"/>
    </conflict>
</comment>
<comment type="sequence caution" evidence="4">
    <conflict type="erroneous initiation">
        <sequence resource="EMBL-CDS" id="CAD01670"/>
    </conflict>
</comment>
<reference key="1">
    <citation type="journal article" date="2001" name="Nature">
        <title>Complete genome sequence of a multiple drug resistant Salmonella enterica serovar Typhi CT18.</title>
        <authorList>
            <person name="Parkhill J."/>
            <person name="Dougan G."/>
            <person name="James K.D."/>
            <person name="Thomson N.R."/>
            <person name="Pickard D."/>
            <person name="Wain J."/>
            <person name="Churcher C.M."/>
            <person name="Mungall K.L."/>
            <person name="Bentley S.D."/>
            <person name="Holden M.T.G."/>
            <person name="Sebaihia M."/>
            <person name="Baker S."/>
            <person name="Basham D."/>
            <person name="Brooks K."/>
            <person name="Chillingworth T."/>
            <person name="Connerton P."/>
            <person name="Cronin A."/>
            <person name="Davis P."/>
            <person name="Davies R.M."/>
            <person name="Dowd L."/>
            <person name="White N."/>
            <person name="Farrar J."/>
            <person name="Feltwell T."/>
            <person name="Hamlin N."/>
            <person name="Haque A."/>
            <person name="Hien T.T."/>
            <person name="Holroyd S."/>
            <person name="Jagels K."/>
            <person name="Krogh A."/>
            <person name="Larsen T.S."/>
            <person name="Leather S."/>
            <person name="Moule S."/>
            <person name="O'Gaora P."/>
            <person name="Parry C."/>
            <person name="Quail M.A."/>
            <person name="Rutherford K.M."/>
            <person name="Simmonds M."/>
            <person name="Skelton J."/>
            <person name="Stevens K."/>
            <person name="Whitehead S."/>
            <person name="Barrell B.G."/>
        </authorList>
    </citation>
    <scope>NUCLEOTIDE SEQUENCE [LARGE SCALE GENOMIC DNA]</scope>
    <source>
        <strain>CT18</strain>
    </source>
</reference>
<reference key="2">
    <citation type="journal article" date="2003" name="J. Bacteriol.">
        <title>Comparative genomics of Salmonella enterica serovar Typhi strains Ty2 and CT18.</title>
        <authorList>
            <person name="Deng W."/>
            <person name="Liou S.-R."/>
            <person name="Plunkett G. III"/>
            <person name="Mayhew G.F."/>
            <person name="Rose D.J."/>
            <person name="Burland V."/>
            <person name="Kodoyianni V."/>
            <person name="Schwartz D.C."/>
            <person name="Blattner F.R."/>
        </authorList>
    </citation>
    <scope>NUCLEOTIDE SEQUENCE [LARGE SCALE GENOMIC DNA]</scope>
    <source>
        <strain>ATCC 700931 / Ty2</strain>
    </source>
</reference>
<organism>
    <name type="scientific">Salmonella typhi</name>
    <dbReference type="NCBI Taxonomy" id="90370"/>
    <lineage>
        <taxon>Bacteria</taxon>
        <taxon>Pseudomonadati</taxon>
        <taxon>Pseudomonadota</taxon>
        <taxon>Gammaproteobacteria</taxon>
        <taxon>Enterobacterales</taxon>
        <taxon>Enterobacteriaceae</taxon>
        <taxon>Salmonella</taxon>
    </lineage>
</organism>
<accession>Q8Z787</accession>
<evidence type="ECO:0000250" key="1"/>
<evidence type="ECO:0000255" key="2"/>
<evidence type="ECO:0000255" key="3">
    <source>
        <dbReference type="PROSITE-ProRule" id="PRU00387"/>
    </source>
</evidence>
<evidence type="ECO:0000305" key="4"/>
<sequence>MIPEKRIIRRIQSGGCAIHCQDCSISQLCIPFTLNEHELDQLDNIIERKKPIQKGQTLFKAGDELKSLYAIRSGTIKSYTITEQGDEQITGFHLAGDLVGFDAIGSGHHPSFAQALETSMVCKIPFETLDDLSGKMPNLRQQMMRLMSGEIKGDQDMILLLSKKNAEERLAAFIYNLSRRFAQRGFSPREFRLTMTRGDIGNYLGLTVETISRLLGRFQKSGMLAVKGKYITIENSDALAALAGHTRNVA</sequence>
<gene>
    <name type="primary">fnr</name>
    <name type="ordered locus">STY1404</name>
    <name type="ordered locus">t1564</name>
</gene>
<feature type="chain" id="PRO_0000100166" description="Fumarate and nitrate reduction regulatory protein">
    <location>
        <begin position="1"/>
        <end position="250"/>
    </location>
</feature>
<feature type="domain" description="HTH crp-type" evidence="3">
    <location>
        <begin position="164"/>
        <end position="237"/>
    </location>
</feature>
<feature type="DNA-binding region" description="H-T-H motif" evidence="3">
    <location>
        <begin position="197"/>
        <end position="216"/>
    </location>
</feature>
<feature type="region of interest" description="Essential for the oxygen-regulated activity" evidence="1">
    <location>
        <begin position="20"/>
        <end position="29"/>
    </location>
</feature>
<feature type="region of interest" description="Activating region 2A" evidence="2">
    <location>
        <begin position="47"/>
        <end position="50"/>
    </location>
</feature>
<feature type="region of interest" description="Activating region 3A" evidence="2">
    <location>
        <begin position="60"/>
        <end position="61"/>
    </location>
</feature>
<feature type="region of interest" description="Activating region 1A" evidence="2">
    <location>
        <begin position="71"/>
        <end position="75"/>
    </location>
</feature>
<feature type="region of interest" description="Activating region 3B" evidence="2">
    <location>
        <position position="81"/>
    </location>
</feature>
<feature type="region of interest" description="Activating region 3C" evidence="2">
    <location>
        <begin position="85"/>
        <end position="87"/>
    </location>
</feature>
<feature type="region of interest" description="Activating region 3D" evidence="2">
    <location>
        <position position="112"/>
    </location>
</feature>
<feature type="region of interest" description="Activating region 1B" evidence="2">
    <location>
        <begin position="116"/>
        <end position="121"/>
    </location>
</feature>
<feature type="region of interest" description="Activating region 2B" evidence="2">
    <location>
        <begin position="123"/>
        <end position="124"/>
    </location>
</feature>
<feature type="region of interest" description="Activating region 2C" evidence="2">
    <location>
        <begin position="127"/>
        <end position="128"/>
    </location>
</feature>
<feature type="region of interest" description="Dimerization" evidence="2">
    <location>
        <begin position="140"/>
        <end position="159"/>
    </location>
</feature>
<feature type="region of interest" description="Activating region 1C" evidence="2">
    <location>
        <begin position="181"/>
        <end position="191"/>
    </location>
</feature>
<feature type="binding site" evidence="2">
    <location>
        <position position="20"/>
    </location>
    <ligand>
        <name>[4Fe-4S] cluster</name>
        <dbReference type="ChEBI" id="CHEBI:49883"/>
    </ligand>
</feature>
<feature type="binding site" evidence="2">
    <location>
        <position position="23"/>
    </location>
    <ligand>
        <name>[4Fe-4S] cluster</name>
        <dbReference type="ChEBI" id="CHEBI:49883"/>
    </ligand>
</feature>
<feature type="binding site" evidence="2">
    <location>
        <position position="29"/>
    </location>
    <ligand>
        <name>[4Fe-4S] cluster</name>
        <dbReference type="ChEBI" id="CHEBI:49883"/>
    </ligand>
</feature>
<feature type="binding site" evidence="2">
    <location>
        <position position="122"/>
    </location>
    <ligand>
        <name>[4Fe-4S] cluster</name>
        <dbReference type="ChEBI" id="CHEBI:49883"/>
    </ligand>
</feature>
<protein>
    <recommendedName>
        <fullName>Fumarate and nitrate reduction regulatory protein</fullName>
    </recommendedName>
</protein>